<proteinExistence type="inferred from homology"/>
<gene>
    <name evidence="1" type="primary">fbp</name>
    <name type="ordered locus">SbBS512_E4852</name>
</gene>
<evidence type="ECO:0000255" key="1">
    <source>
        <dbReference type="HAMAP-Rule" id="MF_01855"/>
    </source>
</evidence>
<keyword id="KW-0119">Carbohydrate metabolism</keyword>
<keyword id="KW-0963">Cytoplasm</keyword>
<keyword id="KW-0378">Hydrolase</keyword>
<keyword id="KW-0460">Magnesium</keyword>
<keyword id="KW-0479">Metal-binding</keyword>
<keyword id="KW-1185">Reference proteome</keyword>
<sequence length="332" mass="36834">MKTLGEFIVEKQHEFSHATGELTALLSAIKLGAKIIHRDINKAGLVDILGASGAENVQGEVQQKLDLFANEKLKAALKARDIVAGIASEEEDEIVVFEGCEHAKYVVLMDPLDGSSNIDVNVSVGTIFSIYRRVTPVGTPVTEEDFLQPGNKQVAAGYVVYGSSTMLVYTTGCGVHAFTYDPSLGVFCLCQERMRFPEKGKTYSINEGNYIKFPNGVKKYIKFCQEEDKSTNRPYTSRYIGSLVADFHRNLLKGGIYLYPSTASHPDGKLRLLYECNPMAFLAEQAGGKASDGKERILDIIPETLHQRRSFFVGNDHMVEDVERFIREFPDA</sequence>
<name>F16PA_SHIB3</name>
<dbReference type="EC" id="3.1.3.11" evidence="1"/>
<dbReference type="EMBL" id="CP001063">
    <property type="protein sequence ID" value="ACD07087.1"/>
    <property type="molecule type" value="Genomic_DNA"/>
</dbReference>
<dbReference type="RefSeq" id="WP_000853753.1">
    <property type="nucleotide sequence ID" value="NC_010658.1"/>
</dbReference>
<dbReference type="SMR" id="B2TZ12"/>
<dbReference type="STRING" id="344609.SbBS512_E4852"/>
<dbReference type="GeneID" id="86861371"/>
<dbReference type="KEGG" id="sbc:SbBS512_E4852"/>
<dbReference type="HOGENOM" id="CLU_039977_2_2_6"/>
<dbReference type="UniPathway" id="UPA00138"/>
<dbReference type="Proteomes" id="UP000001030">
    <property type="component" value="Chromosome"/>
</dbReference>
<dbReference type="GO" id="GO:0005829">
    <property type="term" value="C:cytosol"/>
    <property type="evidence" value="ECO:0007669"/>
    <property type="project" value="TreeGrafter"/>
</dbReference>
<dbReference type="GO" id="GO:0042132">
    <property type="term" value="F:fructose 1,6-bisphosphate 1-phosphatase activity"/>
    <property type="evidence" value="ECO:0007669"/>
    <property type="project" value="UniProtKB-UniRule"/>
</dbReference>
<dbReference type="GO" id="GO:0000287">
    <property type="term" value="F:magnesium ion binding"/>
    <property type="evidence" value="ECO:0007669"/>
    <property type="project" value="UniProtKB-UniRule"/>
</dbReference>
<dbReference type="GO" id="GO:0030388">
    <property type="term" value="P:fructose 1,6-bisphosphate metabolic process"/>
    <property type="evidence" value="ECO:0007669"/>
    <property type="project" value="TreeGrafter"/>
</dbReference>
<dbReference type="GO" id="GO:0006002">
    <property type="term" value="P:fructose 6-phosphate metabolic process"/>
    <property type="evidence" value="ECO:0007669"/>
    <property type="project" value="TreeGrafter"/>
</dbReference>
<dbReference type="GO" id="GO:0006000">
    <property type="term" value="P:fructose metabolic process"/>
    <property type="evidence" value="ECO:0007669"/>
    <property type="project" value="TreeGrafter"/>
</dbReference>
<dbReference type="GO" id="GO:0006094">
    <property type="term" value="P:gluconeogenesis"/>
    <property type="evidence" value="ECO:0007669"/>
    <property type="project" value="UniProtKB-UniRule"/>
</dbReference>
<dbReference type="GO" id="GO:0005986">
    <property type="term" value="P:sucrose biosynthetic process"/>
    <property type="evidence" value="ECO:0007669"/>
    <property type="project" value="TreeGrafter"/>
</dbReference>
<dbReference type="CDD" id="cd00354">
    <property type="entry name" value="FBPase"/>
    <property type="match status" value="1"/>
</dbReference>
<dbReference type="FunFam" id="3.30.540.10:FF:000002">
    <property type="entry name" value="Fructose-1,6-bisphosphatase class 1"/>
    <property type="match status" value="1"/>
</dbReference>
<dbReference type="FunFam" id="3.40.190.80:FF:000001">
    <property type="entry name" value="Fructose-1,6-bisphosphatase class 1"/>
    <property type="match status" value="1"/>
</dbReference>
<dbReference type="Gene3D" id="3.40.190.80">
    <property type="match status" value="1"/>
</dbReference>
<dbReference type="Gene3D" id="3.30.540.10">
    <property type="entry name" value="Fructose-1,6-Bisphosphatase, subunit A, domain 1"/>
    <property type="match status" value="1"/>
</dbReference>
<dbReference type="HAMAP" id="MF_01855">
    <property type="entry name" value="FBPase_class1"/>
    <property type="match status" value="1"/>
</dbReference>
<dbReference type="InterPro" id="IPR044015">
    <property type="entry name" value="FBPase_C_dom"/>
</dbReference>
<dbReference type="InterPro" id="IPR000146">
    <property type="entry name" value="FBPase_class-1"/>
</dbReference>
<dbReference type="InterPro" id="IPR033391">
    <property type="entry name" value="FBPase_N"/>
</dbReference>
<dbReference type="InterPro" id="IPR028343">
    <property type="entry name" value="FBPtase"/>
</dbReference>
<dbReference type="InterPro" id="IPR020548">
    <property type="entry name" value="Fructose_bisphosphatase_AS"/>
</dbReference>
<dbReference type="NCBIfam" id="NF006778">
    <property type="entry name" value="PRK09293.1-1"/>
    <property type="match status" value="1"/>
</dbReference>
<dbReference type="NCBIfam" id="NF006779">
    <property type="entry name" value="PRK09293.1-3"/>
    <property type="match status" value="1"/>
</dbReference>
<dbReference type="PANTHER" id="PTHR11556">
    <property type="entry name" value="FRUCTOSE-1,6-BISPHOSPHATASE-RELATED"/>
    <property type="match status" value="1"/>
</dbReference>
<dbReference type="PANTHER" id="PTHR11556:SF35">
    <property type="entry name" value="SEDOHEPTULOSE-1,7-BISPHOSPHATASE, CHLOROPLASTIC"/>
    <property type="match status" value="1"/>
</dbReference>
<dbReference type="Pfam" id="PF00316">
    <property type="entry name" value="FBPase"/>
    <property type="match status" value="1"/>
</dbReference>
<dbReference type="Pfam" id="PF18913">
    <property type="entry name" value="FBPase_C"/>
    <property type="match status" value="1"/>
</dbReference>
<dbReference type="PIRSF" id="PIRSF500210">
    <property type="entry name" value="FBPtase"/>
    <property type="match status" value="1"/>
</dbReference>
<dbReference type="PIRSF" id="PIRSF000904">
    <property type="entry name" value="FBPtase_SBPase"/>
    <property type="match status" value="1"/>
</dbReference>
<dbReference type="PRINTS" id="PR00115">
    <property type="entry name" value="F16BPHPHTASE"/>
</dbReference>
<dbReference type="SUPFAM" id="SSF56655">
    <property type="entry name" value="Carbohydrate phosphatase"/>
    <property type="match status" value="1"/>
</dbReference>
<dbReference type="PROSITE" id="PS00124">
    <property type="entry name" value="FBPASE"/>
    <property type="match status" value="1"/>
</dbReference>
<accession>B2TZ12</accession>
<protein>
    <recommendedName>
        <fullName evidence="1">Fructose-1,6-bisphosphatase class 1</fullName>
        <shortName evidence="1">FBPase class 1</shortName>
        <ecNumber evidence="1">3.1.3.11</ecNumber>
    </recommendedName>
    <alternativeName>
        <fullName evidence="1">D-fructose-1,6-bisphosphate 1-phosphohydrolase class 1</fullName>
    </alternativeName>
</protein>
<reference key="1">
    <citation type="submission" date="2008-05" db="EMBL/GenBank/DDBJ databases">
        <title>Complete sequence of Shigella boydii serotype 18 strain BS512.</title>
        <authorList>
            <person name="Rasko D.A."/>
            <person name="Rosovitz M."/>
            <person name="Maurelli A.T."/>
            <person name="Myers G."/>
            <person name="Seshadri R."/>
            <person name="Cer R."/>
            <person name="Jiang L."/>
            <person name="Ravel J."/>
            <person name="Sebastian Y."/>
        </authorList>
    </citation>
    <scope>NUCLEOTIDE SEQUENCE [LARGE SCALE GENOMIC DNA]</scope>
    <source>
        <strain>CDC 3083-94 / BS512</strain>
    </source>
</reference>
<feature type="chain" id="PRO_0000364716" description="Fructose-1,6-bisphosphatase class 1">
    <location>
        <begin position="1"/>
        <end position="332"/>
    </location>
</feature>
<feature type="binding site" evidence="1">
    <location>
        <position position="89"/>
    </location>
    <ligand>
        <name>Mg(2+)</name>
        <dbReference type="ChEBI" id="CHEBI:18420"/>
        <label>1</label>
    </ligand>
</feature>
<feature type="binding site" evidence="1">
    <location>
        <position position="110"/>
    </location>
    <ligand>
        <name>Mg(2+)</name>
        <dbReference type="ChEBI" id="CHEBI:18420"/>
        <label>1</label>
    </ligand>
</feature>
<feature type="binding site" evidence="1">
    <location>
        <position position="110"/>
    </location>
    <ligand>
        <name>Mg(2+)</name>
        <dbReference type="ChEBI" id="CHEBI:18420"/>
        <label>2</label>
    </ligand>
</feature>
<feature type="binding site" evidence="1">
    <location>
        <position position="112"/>
    </location>
    <ligand>
        <name>Mg(2+)</name>
        <dbReference type="ChEBI" id="CHEBI:18420"/>
        <label>1</label>
    </ligand>
</feature>
<feature type="binding site" evidence="1">
    <location>
        <begin position="113"/>
        <end position="116"/>
    </location>
    <ligand>
        <name>substrate</name>
    </ligand>
</feature>
<feature type="binding site" evidence="1">
    <location>
        <position position="113"/>
    </location>
    <ligand>
        <name>Mg(2+)</name>
        <dbReference type="ChEBI" id="CHEBI:18420"/>
        <label>2</label>
    </ligand>
</feature>
<feature type="binding site" evidence="1">
    <location>
        <position position="206"/>
    </location>
    <ligand>
        <name>substrate</name>
    </ligand>
</feature>
<feature type="binding site" evidence="1">
    <location>
        <position position="239"/>
    </location>
    <ligand>
        <name>substrate</name>
    </ligand>
</feature>
<feature type="binding site" evidence="1">
    <location>
        <begin position="257"/>
        <end position="259"/>
    </location>
    <ligand>
        <name>substrate</name>
    </ligand>
</feature>
<feature type="binding site" evidence="1">
    <location>
        <position position="269"/>
    </location>
    <ligand>
        <name>substrate</name>
    </ligand>
</feature>
<feature type="binding site" evidence="1">
    <location>
        <position position="275"/>
    </location>
    <ligand>
        <name>Mg(2+)</name>
        <dbReference type="ChEBI" id="CHEBI:18420"/>
        <label>2</label>
    </ligand>
</feature>
<organism>
    <name type="scientific">Shigella boydii serotype 18 (strain CDC 3083-94 / BS512)</name>
    <dbReference type="NCBI Taxonomy" id="344609"/>
    <lineage>
        <taxon>Bacteria</taxon>
        <taxon>Pseudomonadati</taxon>
        <taxon>Pseudomonadota</taxon>
        <taxon>Gammaproteobacteria</taxon>
        <taxon>Enterobacterales</taxon>
        <taxon>Enterobacteriaceae</taxon>
        <taxon>Shigella</taxon>
    </lineage>
</organism>
<comment type="catalytic activity">
    <reaction evidence="1">
        <text>beta-D-fructose 1,6-bisphosphate + H2O = beta-D-fructose 6-phosphate + phosphate</text>
        <dbReference type="Rhea" id="RHEA:11064"/>
        <dbReference type="ChEBI" id="CHEBI:15377"/>
        <dbReference type="ChEBI" id="CHEBI:32966"/>
        <dbReference type="ChEBI" id="CHEBI:43474"/>
        <dbReference type="ChEBI" id="CHEBI:57634"/>
        <dbReference type="EC" id="3.1.3.11"/>
    </reaction>
</comment>
<comment type="cofactor">
    <cofactor evidence="1">
        <name>Mg(2+)</name>
        <dbReference type="ChEBI" id="CHEBI:18420"/>
    </cofactor>
    <text evidence="1">Binds 2 magnesium ions per subunit.</text>
</comment>
<comment type="pathway">
    <text evidence="1">Carbohydrate biosynthesis; gluconeogenesis.</text>
</comment>
<comment type="subunit">
    <text evidence="1">Homotetramer.</text>
</comment>
<comment type="subcellular location">
    <subcellularLocation>
        <location evidence="1">Cytoplasm</location>
    </subcellularLocation>
</comment>
<comment type="similarity">
    <text evidence="1">Belongs to the FBPase class 1 family.</text>
</comment>